<name>RLMN_SHEAM</name>
<accession>A1S866</accession>
<protein>
    <recommendedName>
        <fullName evidence="1">Dual-specificity RNA methyltransferase RlmN</fullName>
        <ecNumber evidence="1">2.1.1.192</ecNumber>
    </recommendedName>
    <alternativeName>
        <fullName evidence="1">23S rRNA (adenine(2503)-C(2))-methyltransferase</fullName>
    </alternativeName>
    <alternativeName>
        <fullName evidence="1">23S rRNA m2A2503 methyltransferase</fullName>
    </alternativeName>
    <alternativeName>
        <fullName evidence="1">Ribosomal RNA large subunit methyltransferase N</fullName>
    </alternativeName>
    <alternativeName>
        <fullName evidence="1">tRNA (adenine(37)-C(2))-methyltransferase</fullName>
    </alternativeName>
    <alternativeName>
        <fullName evidence="1">tRNA m2A37 methyltransferase</fullName>
    </alternativeName>
</protein>
<dbReference type="EC" id="2.1.1.192" evidence="1"/>
<dbReference type="EMBL" id="CP000507">
    <property type="protein sequence ID" value="ABM00573.1"/>
    <property type="molecule type" value="Genomic_DNA"/>
</dbReference>
<dbReference type="RefSeq" id="WP_011760480.1">
    <property type="nucleotide sequence ID" value="NC_008700.1"/>
</dbReference>
<dbReference type="SMR" id="A1S866"/>
<dbReference type="STRING" id="326297.Sama_2368"/>
<dbReference type="KEGG" id="saz:Sama_2368"/>
<dbReference type="eggNOG" id="COG0820">
    <property type="taxonomic scope" value="Bacteria"/>
</dbReference>
<dbReference type="HOGENOM" id="CLU_029101_0_0_6"/>
<dbReference type="OrthoDB" id="9793973at2"/>
<dbReference type="Proteomes" id="UP000009175">
    <property type="component" value="Chromosome"/>
</dbReference>
<dbReference type="GO" id="GO:0005737">
    <property type="term" value="C:cytoplasm"/>
    <property type="evidence" value="ECO:0007669"/>
    <property type="project" value="UniProtKB-SubCell"/>
</dbReference>
<dbReference type="GO" id="GO:0051539">
    <property type="term" value="F:4 iron, 4 sulfur cluster binding"/>
    <property type="evidence" value="ECO:0007669"/>
    <property type="project" value="UniProtKB-UniRule"/>
</dbReference>
<dbReference type="GO" id="GO:0046872">
    <property type="term" value="F:metal ion binding"/>
    <property type="evidence" value="ECO:0007669"/>
    <property type="project" value="UniProtKB-KW"/>
</dbReference>
<dbReference type="GO" id="GO:0070040">
    <property type="term" value="F:rRNA (adenine(2503)-C2-)-methyltransferase activity"/>
    <property type="evidence" value="ECO:0007669"/>
    <property type="project" value="UniProtKB-UniRule"/>
</dbReference>
<dbReference type="GO" id="GO:0019843">
    <property type="term" value="F:rRNA binding"/>
    <property type="evidence" value="ECO:0007669"/>
    <property type="project" value="UniProtKB-UniRule"/>
</dbReference>
<dbReference type="GO" id="GO:0002935">
    <property type="term" value="F:tRNA (adenine(37)-C2)-methyltransferase activity"/>
    <property type="evidence" value="ECO:0007669"/>
    <property type="project" value="UniProtKB-UniRule"/>
</dbReference>
<dbReference type="GO" id="GO:0000049">
    <property type="term" value="F:tRNA binding"/>
    <property type="evidence" value="ECO:0007669"/>
    <property type="project" value="UniProtKB-UniRule"/>
</dbReference>
<dbReference type="GO" id="GO:0070475">
    <property type="term" value="P:rRNA base methylation"/>
    <property type="evidence" value="ECO:0007669"/>
    <property type="project" value="UniProtKB-UniRule"/>
</dbReference>
<dbReference type="GO" id="GO:0030488">
    <property type="term" value="P:tRNA methylation"/>
    <property type="evidence" value="ECO:0007669"/>
    <property type="project" value="UniProtKB-UniRule"/>
</dbReference>
<dbReference type="CDD" id="cd01335">
    <property type="entry name" value="Radical_SAM"/>
    <property type="match status" value="1"/>
</dbReference>
<dbReference type="FunFam" id="1.10.150.530:FF:000003">
    <property type="entry name" value="Dual-specificity RNA methyltransferase RlmN"/>
    <property type="match status" value="1"/>
</dbReference>
<dbReference type="FunFam" id="3.20.20.70:FF:000008">
    <property type="entry name" value="Dual-specificity RNA methyltransferase RlmN"/>
    <property type="match status" value="1"/>
</dbReference>
<dbReference type="Gene3D" id="1.10.150.530">
    <property type="match status" value="1"/>
</dbReference>
<dbReference type="Gene3D" id="3.20.20.70">
    <property type="entry name" value="Aldolase class I"/>
    <property type="match status" value="1"/>
</dbReference>
<dbReference type="HAMAP" id="MF_01849">
    <property type="entry name" value="RNA_methyltr_RlmN"/>
    <property type="match status" value="1"/>
</dbReference>
<dbReference type="InterPro" id="IPR013785">
    <property type="entry name" value="Aldolase_TIM"/>
</dbReference>
<dbReference type="InterPro" id="IPR040072">
    <property type="entry name" value="Methyltransferase_A"/>
</dbReference>
<dbReference type="InterPro" id="IPR048641">
    <property type="entry name" value="RlmN_N"/>
</dbReference>
<dbReference type="InterPro" id="IPR027492">
    <property type="entry name" value="RNA_MTrfase_RlmN"/>
</dbReference>
<dbReference type="InterPro" id="IPR004383">
    <property type="entry name" value="rRNA_lsu_MTrfase_RlmN/Cfr"/>
</dbReference>
<dbReference type="InterPro" id="IPR007197">
    <property type="entry name" value="rSAM"/>
</dbReference>
<dbReference type="NCBIfam" id="NF008396">
    <property type="entry name" value="PRK11194.1"/>
    <property type="match status" value="1"/>
</dbReference>
<dbReference type="NCBIfam" id="TIGR00048">
    <property type="entry name" value="rRNA_mod_RlmN"/>
    <property type="match status" value="1"/>
</dbReference>
<dbReference type="PANTHER" id="PTHR30544">
    <property type="entry name" value="23S RRNA METHYLTRANSFERASE"/>
    <property type="match status" value="1"/>
</dbReference>
<dbReference type="PANTHER" id="PTHR30544:SF5">
    <property type="entry name" value="RADICAL SAM CORE DOMAIN-CONTAINING PROTEIN"/>
    <property type="match status" value="1"/>
</dbReference>
<dbReference type="Pfam" id="PF04055">
    <property type="entry name" value="Radical_SAM"/>
    <property type="match status" value="1"/>
</dbReference>
<dbReference type="Pfam" id="PF21016">
    <property type="entry name" value="RlmN_N"/>
    <property type="match status" value="1"/>
</dbReference>
<dbReference type="PIRSF" id="PIRSF006004">
    <property type="entry name" value="CHP00048"/>
    <property type="match status" value="1"/>
</dbReference>
<dbReference type="SFLD" id="SFLDF00275">
    <property type="entry name" value="adenosine_C2_methyltransferase"/>
    <property type="match status" value="1"/>
</dbReference>
<dbReference type="SFLD" id="SFLDG01062">
    <property type="entry name" value="methyltransferase_(Class_A)"/>
    <property type="match status" value="1"/>
</dbReference>
<dbReference type="SUPFAM" id="SSF102114">
    <property type="entry name" value="Radical SAM enzymes"/>
    <property type="match status" value="1"/>
</dbReference>
<dbReference type="PROSITE" id="PS51918">
    <property type="entry name" value="RADICAL_SAM"/>
    <property type="match status" value="1"/>
</dbReference>
<feature type="chain" id="PRO_0000350392" description="Dual-specificity RNA methyltransferase RlmN">
    <location>
        <begin position="1"/>
        <end position="373"/>
    </location>
</feature>
<feature type="domain" description="Radical SAM core" evidence="2">
    <location>
        <begin position="100"/>
        <end position="339"/>
    </location>
</feature>
<feature type="active site" description="Proton acceptor" evidence="1">
    <location>
        <position position="94"/>
    </location>
</feature>
<feature type="active site" description="S-methylcysteine intermediate" evidence="1">
    <location>
        <position position="344"/>
    </location>
</feature>
<feature type="binding site" evidence="1">
    <location>
        <position position="114"/>
    </location>
    <ligand>
        <name>[4Fe-4S] cluster</name>
        <dbReference type="ChEBI" id="CHEBI:49883"/>
        <note>4Fe-4S-S-AdoMet</note>
    </ligand>
</feature>
<feature type="binding site" evidence="1">
    <location>
        <position position="118"/>
    </location>
    <ligand>
        <name>[4Fe-4S] cluster</name>
        <dbReference type="ChEBI" id="CHEBI:49883"/>
        <note>4Fe-4S-S-AdoMet</note>
    </ligand>
</feature>
<feature type="binding site" evidence="1">
    <location>
        <position position="121"/>
    </location>
    <ligand>
        <name>[4Fe-4S] cluster</name>
        <dbReference type="ChEBI" id="CHEBI:49883"/>
        <note>4Fe-4S-S-AdoMet</note>
    </ligand>
</feature>
<feature type="binding site" evidence="1">
    <location>
        <begin position="168"/>
        <end position="169"/>
    </location>
    <ligand>
        <name>S-adenosyl-L-methionine</name>
        <dbReference type="ChEBI" id="CHEBI:59789"/>
    </ligand>
</feature>
<feature type="binding site" evidence="1">
    <location>
        <position position="200"/>
    </location>
    <ligand>
        <name>S-adenosyl-L-methionine</name>
        <dbReference type="ChEBI" id="CHEBI:59789"/>
    </ligand>
</feature>
<feature type="binding site" evidence="1">
    <location>
        <begin position="222"/>
        <end position="224"/>
    </location>
    <ligand>
        <name>S-adenosyl-L-methionine</name>
        <dbReference type="ChEBI" id="CHEBI:59789"/>
    </ligand>
</feature>
<feature type="binding site" evidence="1">
    <location>
        <position position="301"/>
    </location>
    <ligand>
        <name>S-adenosyl-L-methionine</name>
        <dbReference type="ChEBI" id="CHEBI:59789"/>
    </ligand>
</feature>
<feature type="disulfide bond" description="(transient)" evidence="1">
    <location>
        <begin position="107"/>
        <end position="344"/>
    </location>
</feature>
<sequence>MSEKKINLLDLDLPGLKALLTEMGEKPFRAQQIMQWIYHFGVSDFEQMTNINKAMRAKLAARCEIVAPEITSYQKSSDGTIKFAINVGQGQEVETVYIPEDDRATLCVSSQVGCALECTFCSTAQQGFNRNLTVSEIVGQIWRVSHFLGFQKETGERPISNVVMMGMGEPLLNLANVVPAMNIMLDDYGFGLSKRRVTLSTSGVVPALDKLGDVIDVALAVSIHAPNDELRDVLVPINKKYPLQEFLAAIRRYLEKSNANRGRVTLEYVMLDHINDSTDQAHELAKLMKDTPCKINLIPFNPYPGSPYGRSSNSRIDRFAKVLMEYDLTVIVRKTRGDDIDAACGQLAGDIRDRTKRLAKKRMQESQISVTMN</sequence>
<keyword id="KW-0004">4Fe-4S</keyword>
<keyword id="KW-0963">Cytoplasm</keyword>
<keyword id="KW-1015">Disulfide bond</keyword>
<keyword id="KW-0408">Iron</keyword>
<keyword id="KW-0411">Iron-sulfur</keyword>
<keyword id="KW-0479">Metal-binding</keyword>
<keyword id="KW-0489">Methyltransferase</keyword>
<keyword id="KW-1185">Reference proteome</keyword>
<keyword id="KW-0698">rRNA processing</keyword>
<keyword id="KW-0949">S-adenosyl-L-methionine</keyword>
<keyword id="KW-0808">Transferase</keyword>
<keyword id="KW-0819">tRNA processing</keyword>
<reference key="1">
    <citation type="submission" date="2006-12" db="EMBL/GenBank/DDBJ databases">
        <title>Complete sequence of Shewanella amazonensis SB2B.</title>
        <authorList>
            <consortium name="US DOE Joint Genome Institute"/>
            <person name="Copeland A."/>
            <person name="Lucas S."/>
            <person name="Lapidus A."/>
            <person name="Barry K."/>
            <person name="Detter J.C."/>
            <person name="Glavina del Rio T."/>
            <person name="Hammon N."/>
            <person name="Israni S."/>
            <person name="Dalin E."/>
            <person name="Tice H."/>
            <person name="Pitluck S."/>
            <person name="Munk A.C."/>
            <person name="Brettin T."/>
            <person name="Bruce D."/>
            <person name="Han C."/>
            <person name="Tapia R."/>
            <person name="Gilna P."/>
            <person name="Schmutz J."/>
            <person name="Larimer F."/>
            <person name="Land M."/>
            <person name="Hauser L."/>
            <person name="Kyrpides N."/>
            <person name="Mikhailova N."/>
            <person name="Fredrickson J."/>
            <person name="Richardson P."/>
        </authorList>
    </citation>
    <scope>NUCLEOTIDE SEQUENCE [LARGE SCALE GENOMIC DNA]</scope>
    <source>
        <strain>ATCC BAA-1098 / SB2B</strain>
    </source>
</reference>
<organism>
    <name type="scientific">Shewanella amazonensis (strain ATCC BAA-1098 / SB2B)</name>
    <dbReference type="NCBI Taxonomy" id="326297"/>
    <lineage>
        <taxon>Bacteria</taxon>
        <taxon>Pseudomonadati</taxon>
        <taxon>Pseudomonadota</taxon>
        <taxon>Gammaproteobacteria</taxon>
        <taxon>Alteromonadales</taxon>
        <taxon>Shewanellaceae</taxon>
        <taxon>Shewanella</taxon>
    </lineage>
</organism>
<comment type="function">
    <text evidence="1">Specifically methylates position 2 of adenine 2503 in 23S rRNA and position 2 of adenine 37 in tRNAs. m2A2503 modification seems to play a crucial role in the proofreading step occurring at the peptidyl transferase center and thus would serve to optimize ribosomal fidelity.</text>
</comment>
<comment type="catalytic activity">
    <reaction evidence="1">
        <text>adenosine(2503) in 23S rRNA + 2 reduced [2Fe-2S]-[ferredoxin] + 2 S-adenosyl-L-methionine = 2-methyladenosine(2503) in 23S rRNA + 5'-deoxyadenosine + L-methionine + 2 oxidized [2Fe-2S]-[ferredoxin] + S-adenosyl-L-homocysteine</text>
        <dbReference type="Rhea" id="RHEA:42916"/>
        <dbReference type="Rhea" id="RHEA-COMP:10000"/>
        <dbReference type="Rhea" id="RHEA-COMP:10001"/>
        <dbReference type="Rhea" id="RHEA-COMP:10152"/>
        <dbReference type="Rhea" id="RHEA-COMP:10282"/>
        <dbReference type="ChEBI" id="CHEBI:17319"/>
        <dbReference type="ChEBI" id="CHEBI:33737"/>
        <dbReference type="ChEBI" id="CHEBI:33738"/>
        <dbReference type="ChEBI" id="CHEBI:57844"/>
        <dbReference type="ChEBI" id="CHEBI:57856"/>
        <dbReference type="ChEBI" id="CHEBI:59789"/>
        <dbReference type="ChEBI" id="CHEBI:74411"/>
        <dbReference type="ChEBI" id="CHEBI:74497"/>
        <dbReference type="EC" id="2.1.1.192"/>
    </reaction>
</comment>
<comment type="catalytic activity">
    <reaction evidence="1">
        <text>adenosine(37) in tRNA + 2 reduced [2Fe-2S]-[ferredoxin] + 2 S-adenosyl-L-methionine = 2-methyladenosine(37) in tRNA + 5'-deoxyadenosine + L-methionine + 2 oxidized [2Fe-2S]-[ferredoxin] + S-adenosyl-L-homocysteine</text>
        <dbReference type="Rhea" id="RHEA:43332"/>
        <dbReference type="Rhea" id="RHEA-COMP:10000"/>
        <dbReference type="Rhea" id="RHEA-COMP:10001"/>
        <dbReference type="Rhea" id="RHEA-COMP:10162"/>
        <dbReference type="Rhea" id="RHEA-COMP:10485"/>
        <dbReference type="ChEBI" id="CHEBI:17319"/>
        <dbReference type="ChEBI" id="CHEBI:33737"/>
        <dbReference type="ChEBI" id="CHEBI:33738"/>
        <dbReference type="ChEBI" id="CHEBI:57844"/>
        <dbReference type="ChEBI" id="CHEBI:57856"/>
        <dbReference type="ChEBI" id="CHEBI:59789"/>
        <dbReference type="ChEBI" id="CHEBI:74411"/>
        <dbReference type="ChEBI" id="CHEBI:74497"/>
        <dbReference type="EC" id="2.1.1.192"/>
    </reaction>
</comment>
<comment type="cofactor">
    <cofactor evidence="1">
        <name>[4Fe-4S] cluster</name>
        <dbReference type="ChEBI" id="CHEBI:49883"/>
    </cofactor>
    <text evidence="1">Binds 1 [4Fe-4S] cluster. The cluster is coordinated with 3 cysteines and an exchangeable S-adenosyl-L-methionine.</text>
</comment>
<comment type="subcellular location">
    <subcellularLocation>
        <location evidence="1">Cytoplasm</location>
    </subcellularLocation>
</comment>
<comment type="miscellaneous">
    <text evidence="1">Reaction proceeds by a ping-pong mechanism involving intermediate methylation of a conserved cysteine residue.</text>
</comment>
<comment type="similarity">
    <text evidence="1">Belongs to the radical SAM superfamily. RlmN family.</text>
</comment>
<gene>
    <name evidence="1" type="primary">rlmN</name>
    <name type="ordered locus">Sama_2368</name>
</gene>
<evidence type="ECO:0000255" key="1">
    <source>
        <dbReference type="HAMAP-Rule" id="MF_01849"/>
    </source>
</evidence>
<evidence type="ECO:0000255" key="2">
    <source>
        <dbReference type="PROSITE-ProRule" id="PRU01266"/>
    </source>
</evidence>
<proteinExistence type="inferred from homology"/>